<feature type="chain" id="PRO_0000215045" description="Pectinesterase">
    <location>
        <begin position="1"/>
        <end position="319"/>
    </location>
</feature>
<feature type="active site" description="Proton donor">
    <location>
        <position position="136"/>
    </location>
</feature>
<feature type="active site" description="Nucleophile">
    <location>
        <position position="157"/>
    </location>
</feature>
<feature type="binding site" evidence="1">
    <location>
        <position position="83"/>
    </location>
    <ligand>
        <name>substrate</name>
    </ligand>
</feature>
<feature type="binding site" evidence="1">
    <location>
        <position position="113"/>
    </location>
    <ligand>
        <name>substrate</name>
    </ligand>
</feature>
<feature type="binding site" evidence="1">
    <location>
        <position position="225"/>
    </location>
    <ligand>
        <name>substrate</name>
    </ligand>
</feature>
<feature type="binding site" evidence="1">
    <location>
        <position position="227"/>
    </location>
    <ligand>
        <name>substrate</name>
    </ligand>
</feature>
<feature type="site" description="Transition state stabilizer" evidence="1">
    <location>
        <position position="135"/>
    </location>
</feature>
<feature type="modified residue" description="Pyrrolidone carboxylic acid" evidence="2">
    <location>
        <position position="1"/>
    </location>
</feature>
<feature type="disulfide bond" evidence="1">
    <location>
        <begin position="150"/>
        <end position="170"/>
    </location>
</feature>
<feature type="strand" evidence="4">
    <location>
        <begin position="8"/>
        <end position="11"/>
    </location>
</feature>
<feature type="strand" evidence="4">
    <location>
        <begin position="17"/>
        <end position="21"/>
    </location>
</feature>
<feature type="helix" evidence="4">
    <location>
        <begin position="22"/>
        <end position="28"/>
    </location>
</feature>
<feature type="strand" evidence="4">
    <location>
        <begin position="37"/>
        <end position="41"/>
    </location>
</feature>
<feature type="strand" evidence="4">
    <location>
        <begin position="43"/>
        <end position="47"/>
    </location>
</feature>
<feature type="strand" evidence="4">
    <location>
        <begin position="50"/>
        <end position="52"/>
    </location>
</feature>
<feature type="strand" evidence="4">
    <location>
        <begin position="58"/>
        <end position="64"/>
    </location>
</feature>
<feature type="turn" evidence="4">
    <location>
        <begin position="66"/>
        <end position="68"/>
    </location>
</feature>
<feature type="strand" evidence="4">
    <location>
        <begin position="69"/>
        <end position="73"/>
    </location>
</feature>
<feature type="turn" evidence="4">
    <location>
        <begin position="77"/>
        <end position="80"/>
    </location>
</feature>
<feature type="helix" evidence="4">
    <location>
        <begin position="84"/>
        <end position="86"/>
    </location>
</feature>
<feature type="strand" evidence="4">
    <location>
        <begin position="88"/>
        <end position="91"/>
    </location>
</feature>
<feature type="strand" evidence="4">
    <location>
        <begin position="97"/>
        <end position="105"/>
    </location>
</feature>
<feature type="helix" evidence="4">
    <location>
        <begin position="109"/>
        <end position="111"/>
    </location>
</feature>
<feature type="strand" evidence="4">
    <location>
        <begin position="116"/>
        <end position="119"/>
    </location>
</feature>
<feature type="strand" evidence="4">
    <location>
        <begin position="124"/>
        <end position="132"/>
    </location>
</feature>
<feature type="strand" evidence="4">
    <location>
        <begin position="138"/>
        <end position="140"/>
    </location>
</feature>
<feature type="strand" evidence="4">
    <location>
        <begin position="142"/>
        <end position="149"/>
    </location>
</feature>
<feature type="strand" evidence="4">
    <location>
        <begin position="151"/>
        <end position="157"/>
    </location>
</feature>
<feature type="strand" evidence="4">
    <location>
        <begin position="159"/>
        <end position="162"/>
    </location>
</feature>
<feature type="strand" evidence="4">
    <location>
        <begin position="164"/>
        <end position="169"/>
    </location>
</feature>
<feature type="strand" evidence="4">
    <location>
        <begin position="171"/>
        <end position="174"/>
    </location>
</feature>
<feature type="strand" evidence="4">
    <location>
        <begin position="183"/>
        <end position="188"/>
    </location>
</feature>
<feature type="strand" evidence="4">
    <location>
        <begin position="198"/>
        <end position="203"/>
    </location>
</feature>
<feature type="strand" evidence="4">
    <location>
        <begin position="205"/>
        <end position="208"/>
    </location>
</feature>
<feature type="turn" evidence="4">
    <location>
        <begin position="210"/>
        <end position="212"/>
    </location>
</feature>
<feature type="helix" evidence="4">
    <location>
        <begin position="213"/>
        <end position="218"/>
    </location>
</feature>
<feature type="strand" evidence="4">
    <location>
        <begin position="221"/>
        <end position="224"/>
    </location>
</feature>
<feature type="strand" evidence="4">
    <location>
        <begin position="232"/>
        <end position="237"/>
    </location>
</feature>
<feature type="turn" evidence="4">
    <location>
        <begin position="254"/>
        <end position="260"/>
    </location>
</feature>
<feature type="strand" evidence="4">
    <location>
        <begin position="262"/>
        <end position="267"/>
    </location>
</feature>
<feature type="helix" evidence="4">
    <location>
        <begin position="271"/>
        <end position="273"/>
    </location>
</feature>
<feature type="strand" evidence="4">
    <location>
        <begin position="284"/>
        <end position="286"/>
    </location>
</feature>
<feature type="helix" evidence="4">
    <location>
        <begin position="290"/>
        <end position="294"/>
    </location>
</feature>
<feature type="helix" evidence="4">
    <location>
        <begin position="298"/>
        <end position="301"/>
    </location>
</feature>
<feature type="helix" evidence="4">
    <location>
        <begin position="304"/>
        <end position="306"/>
    </location>
</feature>
<feature type="helix" evidence="4">
    <location>
        <begin position="309"/>
        <end position="311"/>
    </location>
</feature>
<comment type="function">
    <text>Catalyzes the deesterification of methyl-esterified D-galactosiduronic acid units in pectic compounds. It participates in modulating cell wall during fruit ripening, cell wall extension during pollen germination, and in defense mechanisms against pathogens.</text>
</comment>
<comment type="catalytic activity">
    <reaction>
        <text>[(1-&gt;4)-alpha-D-galacturonosyl methyl ester](n) + n H2O = [(1-&gt;4)-alpha-D-galacturonosyl](n) + n methanol + n H(+)</text>
        <dbReference type="Rhea" id="RHEA:22380"/>
        <dbReference type="Rhea" id="RHEA-COMP:14570"/>
        <dbReference type="Rhea" id="RHEA-COMP:14573"/>
        <dbReference type="ChEBI" id="CHEBI:15377"/>
        <dbReference type="ChEBI" id="CHEBI:15378"/>
        <dbReference type="ChEBI" id="CHEBI:17790"/>
        <dbReference type="ChEBI" id="CHEBI:140522"/>
        <dbReference type="ChEBI" id="CHEBI:140523"/>
        <dbReference type="EC" id="3.1.1.11"/>
    </reaction>
</comment>
<comment type="pathway">
    <text>Glycan metabolism; pectin degradation; 2-dehydro-3-deoxy-D-gluconate from pectin: step 1/5.</text>
</comment>
<comment type="subcellular location">
    <subcellularLocation>
        <location evidence="3">Secreted</location>
        <location evidence="3">Cell wall</location>
    </subcellularLocation>
</comment>
<comment type="similarity">
    <text evidence="3">Belongs to the pectinesterase family.</text>
</comment>
<reference key="1">
    <citation type="journal article" date="2002" name="Cell. Mol. Life Sci.">
        <title>Characterization of carrot pectin methylesterase.</title>
        <authorList>
            <person name="Markovic O."/>
            <person name="Cederlund E."/>
            <person name="Griffiths W.J."/>
            <person name="Lipka T."/>
            <person name="Joernvall H."/>
        </authorList>
    </citation>
    <scope>PROTEIN SEQUENCE</scope>
    <scope>PYROGLUTAMATE FORMATION AT GLN-1</scope>
    <source>
        <strain>cv. Tiptop</strain>
        <tissue>Root</tissue>
    </source>
</reference>
<reference key="2">
    <citation type="journal article" date="2002" name="FEBS Lett.">
        <title>Crystal structure of plant pectin methylesterase.</title>
        <authorList>
            <person name="Johansson K."/>
            <person name="El-Ahmad M."/>
            <person name="Friemann R."/>
            <person name="Joernvall H."/>
            <person name="Markovic O."/>
            <person name="Eklund H."/>
        </authorList>
    </citation>
    <scope>X-RAY CRYSTALLOGRAPHY (1.75 ANGSTROMS)</scope>
    <scope>CHARACTERIZATION</scope>
</reference>
<protein>
    <recommendedName>
        <fullName>Pectinesterase</fullName>
        <shortName>PE</shortName>
        <ecNumber>3.1.1.11</ecNumber>
    </recommendedName>
    <alternativeName>
        <fullName>Pectin methylesterase</fullName>
    </alternativeName>
</protein>
<sequence length="319" mass="34254">QSSTVTPNVVVAADGSGDYKTVSEAVAAAPEDSKTRYVIRIKAGVYRENVDVPKKKKNIMFLGDGRTSTIITASKNVQDGSTTFNSATVAAVGAGFLARDITFQNTAGAAKHQAVALRVGSDLSAFYRCDILAYQDSLYVHSNRQFFINCFIAGTVDFIFGNAAVVLQDCDIHARRPGSGQKNMVTAQGRTDPNQNTGIVIQKSRIGATSDLQPVQSSFPTYLGRPWKEYSRTVVMQSSITNVINPAGWFPWDGNFALDTLYYGEYQNTGAGAATSGRVTWKGFKVITSSTEAQGFTPGSFIAGGSWLKATTFPFSLGL</sequence>
<evidence type="ECO:0000250" key="1"/>
<evidence type="ECO:0000269" key="2">
    <source>
    </source>
</evidence>
<evidence type="ECO:0000305" key="3"/>
<evidence type="ECO:0007829" key="4">
    <source>
        <dbReference type="PDB" id="1GQ8"/>
    </source>
</evidence>
<name>PME_DAUCA</name>
<organism>
    <name type="scientific">Daucus carota</name>
    <name type="common">Wild carrot</name>
    <dbReference type="NCBI Taxonomy" id="4039"/>
    <lineage>
        <taxon>Eukaryota</taxon>
        <taxon>Viridiplantae</taxon>
        <taxon>Streptophyta</taxon>
        <taxon>Embryophyta</taxon>
        <taxon>Tracheophyta</taxon>
        <taxon>Spermatophyta</taxon>
        <taxon>Magnoliopsida</taxon>
        <taxon>eudicotyledons</taxon>
        <taxon>Gunneridae</taxon>
        <taxon>Pentapetalae</taxon>
        <taxon>asterids</taxon>
        <taxon>campanulids</taxon>
        <taxon>Apiales</taxon>
        <taxon>Apiaceae</taxon>
        <taxon>Apioideae</taxon>
        <taxon>Scandiceae</taxon>
        <taxon>Daucinae</taxon>
        <taxon>Daucus</taxon>
        <taxon>Daucus sect. Daucus</taxon>
    </lineage>
</organism>
<proteinExistence type="evidence at protein level"/>
<keyword id="KW-0002">3D-structure</keyword>
<keyword id="KW-0063">Aspartyl esterase</keyword>
<keyword id="KW-0134">Cell wall</keyword>
<keyword id="KW-0961">Cell wall biogenesis/degradation</keyword>
<keyword id="KW-0903">Direct protein sequencing</keyword>
<keyword id="KW-1015">Disulfide bond</keyword>
<keyword id="KW-0378">Hydrolase</keyword>
<keyword id="KW-0873">Pyrrolidone carboxylic acid</keyword>
<keyword id="KW-0964">Secreted</keyword>
<dbReference type="EC" id="3.1.1.11"/>
<dbReference type="PDB" id="1GQ8">
    <property type="method" value="X-ray"/>
    <property type="resolution" value="1.75 A"/>
    <property type="chains" value="A=2-319"/>
</dbReference>
<dbReference type="PDBsum" id="1GQ8"/>
<dbReference type="SMR" id="P83218"/>
<dbReference type="BRENDA" id="3.1.1.11">
    <property type="organism ID" value="1841"/>
</dbReference>
<dbReference type="UniPathway" id="UPA00545">
    <property type="reaction ID" value="UER00823"/>
</dbReference>
<dbReference type="EvolutionaryTrace" id="P83218"/>
<dbReference type="GO" id="GO:0005576">
    <property type="term" value="C:extracellular region"/>
    <property type="evidence" value="ECO:0007669"/>
    <property type="project" value="UniProtKB-KW"/>
</dbReference>
<dbReference type="GO" id="GO:0030599">
    <property type="term" value="F:pectinesterase activity"/>
    <property type="evidence" value="ECO:0007669"/>
    <property type="project" value="UniProtKB-EC"/>
</dbReference>
<dbReference type="GO" id="GO:0042545">
    <property type="term" value="P:cell wall modification"/>
    <property type="evidence" value="ECO:0007669"/>
    <property type="project" value="InterPro"/>
</dbReference>
<dbReference type="GO" id="GO:0045490">
    <property type="term" value="P:pectin catabolic process"/>
    <property type="evidence" value="ECO:0007669"/>
    <property type="project" value="UniProtKB-UniPathway"/>
</dbReference>
<dbReference type="FunFam" id="2.160.20.10:FF:000001">
    <property type="entry name" value="Pectinesterase"/>
    <property type="match status" value="1"/>
</dbReference>
<dbReference type="Gene3D" id="2.160.20.10">
    <property type="entry name" value="Single-stranded right-handed beta-helix, Pectin lyase-like"/>
    <property type="match status" value="1"/>
</dbReference>
<dbReference type="InterPro" id="IPR012334">
    <property type="entry name" value="Pectin_lyas_fold"/>
</dbReference>
<dbReference type="InterPro" id="IPR011050">
    <property type="entry name" value="Pectin_lyase_fold/virulence"/>
</dbReference>
<dbReference type="InterPro" id="IPR033131">
    <property type="entry name" value="Pectinesterase_Asp_AS"/>
</dbReference>
<dbReference type="InterPro" id="IPR000070">
    <property type="entry name" value="Pectinesterase_cat"/>
</dbReference>
<dbReference type="InterPro" id="IPR018040">
    <property type="entry name" value="Pectinesterase_Tyr_AS"/>
</dbReference>
<dbReference type="PANTHER" id="PTHR31707">
    <property type="entry name" value="PECTINESTERASE"/>
    <property type="match status" value="1"/>
</dbReference>
<dbReference type="Pfam" id="PF01095">
    <property type="entry name" value="Pectinesterase"/>
    <property type="match status" value="1"/>
</dbReference>
<dbReference type="SUPFAM" id="SSF51126">
    <property type="entry name" value="Pectin lyase-like"/>
    <property type="match status" value="1"/>
</dbReference>
<dbReference type="PROSITE" id="PS00800">
    <property type="entry name" value="PECTINESTERASE_1"/>
    <property type="match status" value="1"/>
</dbReference>
<dbReference type="PROSITE" id="PS00503">
    <property type="entry name" value="PECTINESTERASE_2"/>
    <property type="match status" value="1"/>
</dbReference>
<accession>P83218</accession>